<accession>B2CQK0</accession>
<name>VOSA_AJECA</name>
<reference key="1">
    <citation type="journal article" date="2008" name="Proc. Natl. Acad. Sci. U.S.A.">
        <title>Conserved factors Ryp2 and Ryp3 control cell morphology and infectious spore formation in the fungal pathogen Histoplasma capsulatum.</title>
        <authorList>
            <person name="Webster R.H."/>
            <person name="Sil A."/>
        </authorList>
    </citation>
    <scope>NUCLEOTIDE SEQUENCE [GENOMIC DNA]</scope>
    <scope>INDUCTION</scope>
    <scope>FUNCTION</scope>
    <scope>DISRUPTION PHENOTYPE</scope>
    <source>
        <strain>ATCC 26032 / G217B</strain>
    </source>
</reference>
<protein>
    <recommendedName>
        <fullName evidence="6">Spore development regulator RYP2</fullName>
    </recommendedName>
</protein>
<sequence>MSAPTFAEDPVTQRPALQSADFRLTVRQNPERARVAGGKEKERKAVDPPPIIQLKIDESKDPGQNYLQSPFYFMCCTLYNATEDTPATTAQSTALAGTLVSSLHRLKDTDNMEGGFFVFGDLSVKIEGEFRLKFNLFEMREVKRCGGSRDEVVYIKSILSKPFTVLPPKNFPGMTESTWLSRSFADQGVKLRIRKEARTLLKRPLNRAEPDYPAPPTQPRTPERSGASSQQMVAAYQTNRDYPFYNGPDAKRPRSSVDMSGRGLYEGDARYSYPPHAANPYQGQTYQQGMMQGYPTAGAGVSDYAIRQAQQGSTPTPFGSADESIGSIRSPGAGGYIGQPRYQSYSGAQMPYNLASSTQMSQMGESTPGRTGQAANMGGIVSGQSFSQSAGHMQSPSQVPPAWG</sequence>
<organism>
    <name type="scientific">Ajellomyces capsulatus</name>
    <name type="common">Darling's disease fungus</name>
    <name type="synonym">Histoplasma capsulatum</name>
    <dbReference type="NCBI Taxonomy" id="5037"/>
    <lineage>
        <taxon>Eukaryota</taxon>
        <taxon>Fungi</taxon>
        <taxon>Dikarya</taxon>
        <taxon>Ascomycota</taxon>
        <taxon>Pezizomycotina</taxon>
        <taxon>Eurotiomycetes</taxon>
        <taxon>Eurotiomycetidae</taxon>
        <taxon>Onygenales</taxon>
        <taxon>Ajellomycetaceae</taxon>
        <taxon>Histoplasma</taxon>
    </lineage>
</organism>
<keyword id="KW-0539">Nucleus</keyword>
<keyword id="KW-0749">Sporulation</keyword>
<keyword id="KW-0804">Transcription</keyword>
<keyword id="KW-0805">Transcription regulation</keyword>
<evidence type="ECO:0000250" key="1">
    <source>
        <dbReference type="UniProtKB" id="Q5BBX1"/>
    </source>
</evidence>
<evidence type="ECO:0000255" key="2">
    <source>
        <dbReference type="PROSITE-ProRule" id="PRU01165"/>
    </source>
</evidence>
<evidence type="ECO:0000256" key="3">
    <source>
        <dbReference type="SAM" id="MobiDB-lite"/>
    </source>
</evidence>
<evidence type="ECO:0000269" key="4">
    <source>
    </source>
</evidence>
<evidence type="ECO:0000303" key="5">
    <source>
    </source>
</evidence>
<evidence type="ECO:0000305" key="6"/>
<proteinExistence type="evidence at protein level"/>
<gene>
    <name evidence="5" type="primary">RYP2</name>
</gene>
<comment type="function">
    <text evidence="1 4">Component of the RYP2-RYP3 heterodimeric complex that plays a dual role in activating genes associated with spore maturation and repressing certain development-associated genes (By similarity). The complex binds DNA through the DNA-binding domain of vosA that recognizes an 11-nucleotide consensus sequence 5'-CTGGCCGCGGC-3' consisting of two motifs in the promoters of key developmental regulatory genes (By similarity). Required for viable spore production and regulation of sporulation in response to temperature and for the switch to yeast-form in the presence of host cells (PubMed:18791067).</text>
</comment>
<comment type="subunit">
    <text evidence="1">Forms a heterodimeric complex with RYP3; the formation of the RYP2-RYP3 complex is light-dependent (By similarity).</text>
</comment>
<comment type="interaction">
    <interactant intactId="EBI-16068756">
        <id>B2CQK0</id>
    </interactant>
    <interactant intactId="EBI-16068767">
        <id>B2CQK1</id>
        <label>RYP3</label>
    </interactant>
    <organismsDiffer>false</organismsDiffer>
    <experiments>4</experiments>
</comment>
<comment type="subcellular location">
    <subcellularLocation>
        <location evidence="1">Nucleus</location>
    </subcellularLocation>
</comment>
<comment type="induction">
    <text evidence="4">Expression is increased at higher temperature (37 degrees Celsius) and regulated by the transcription factor RYP1 (PubMed:18791067).</text>
</comment>
<comment type="domain">
    <text evidence="1">The N-terminal velvet domain contains a NF-kappa-B-like fold and is involved in DNA-binding (By similarity).</text>
</comment>
<comment type="disruption phenotype">
    <text evidence="4">Leads to predominant production of large tuberculate spores with spores severe viability defects (PubMed:18791067).</text>
</comment>
<comment type="similarity">
    <text evidence="6">Belongs to the velvet family. VosA subfamily.</text>
</comment>
<dbReference type="EMBL" id="EU543495">
    <property type="protein sequence ID" value="ACB59236.1"/>
    <property type="molecule type" value="Genomic_DNA"/>
</dbReference>
<dbReference type="SMR" id="B2CQK0"/>
<dbReference type="DIP" id="DIP-60479N"/>
<dbReference type="IntAct" id="B2CQK0">
    <property type="interactions" value="2"/>
</dbReference>
<dbReference type="VEuPathDB" id="FungiDB:I7I52_09871"/>
<dbReference type="OrthoDB" id="5599552at2759"/>
<dbReference type="GO" id="GO:0005634">
    <property type="term" value="C:nucleus"/>
    <property type="evidence" value="ECO:0007669"/>
    <property type="project" value="UniProtKB-SubCell"/>
</dbReference>
<dbReference type="GO" id="GO:0030435">
    <property type="term" value="P:sporulation resulting in formation of a cellular spore"/>
    <property type="evidence" value="ECO:0007669"/>
    <property type="project" value="UniProtKB-KW"/>
</dbReference>
<dbReference type="Gene3D" id="2.60.40.3960">
    <property type="entry name" value="Velvet domain"/>
    <property type="match status" value="1"/>
</dbReference>
<dbReference type="InterPro" id="IPR021740">
    <property type="entry name" value="Velvet"/>
</dbReference>
<dbReference type="InterPro" id="IPR037525">
    <property type="entry name" value="Velvet_dom"/>
</dbReference>
<dbReference type="InterPro" id="IPR038491">
    <property type="entry name" value="Velvet_dom_sf"/>
</dbReference>
<dbReference type="PANTHER" id="PTHR33572">
    <property type="entry name" value="SPORE DEVELOPMENT REGULATOR VOSA"/>
    <property type="match status" value="1"/>
</dbReference>
<dbReference type="PANTHER" id="PTHR33572:SF18">
    <property type="entry name" value="SPORE DEVELOPMENT REGULATOR VOSA"/>
    <property type="match status" value="1"/>
</dbReference>
<dbReference type="Pfam" id="PF11754">
    <property type="entry name" value="Velvet"/>
    <property type="match status" value="1"/>
</dbReference>
<dbReference type="PROSITE" id="PS51821">
    <property type="entry name" value="VELVET"/>
    <property type="match status" value="1"/>
</dbReference>
<feature type="chain" id="PRO_0000435790" description="Spore development regulator RYP2">
    <location>
        <begin position="1"/>
        <end position="404"/>
    </location>
</feature>
<feature type="domain" description="Velvet" evidence="2">
    <location>
        <begin position="17"/>
        <end position="194"/>
    </location>
</feature>
<feature type="region of interest" description="Disordered" evidence="3">
    <location>
        <begin position="1"/>
        <end position="46"/>
    </location>
</feature>
<feature type="region of interest" description="Disordered" evidence="3">
    <location>
        <begin position="200"/>
        <end position="231"/>
    </location>
</feature>
<feature type="region of interest" description="Disordered" evidence="3">
    <location>
        <begin position="382"/>
        <end position="404"/>
    </location>
</feature>
<feature type="compositionally biased region" description="Basic and acidic residues" evidence="3">
    <location>
        <begin position="29"/>
        <end position="46"/>
    </location>
</feature>
<feature type="compositionally biased region" description="Polar residues" evidence="3">
    <location>
        <begin position="382"/>
        <end position="397"/>
    </location>
</feature>